<sequence length="82" mass="9451">MAEVSSAPVRRPFHRRRKTCPFSGANAPRIDYKDVRLLQRYISERGKIVPSRITAVSQKKQRELAQAIKRARFLGLLPYIVS</sequence>
<feature type="chain" id="PRO_0000111214" description="Small ribosomal subunit protein bS18">
    <location>
        <begin position="1"/>
        <end position="82"/>
    </location>
</feature>
<gene>
    <name evidence="1" type="primary">rpsR</name>
    <name type="ordered locus">R01137</name>
    <name type="ORF">SMc00567</name>
</gene>
<name>RS18_RHIME</name>
<protein>
    <recommendedName>
        <fullName evidence="1">Small ribosomal subunit protein bS18</fullName>
    </recommendedName>
    <alternativeName>
        <fullName evidence="2">30S ribosomal protein S18</fullName>
    </alternativeName>
</protein>
<proteinExistence type="inferred from homology"/>
<evidence type="ECO:0000255" key="1">
    <source>
        <dbReference type="HAMAP-Rule" id="MF_00270"/>
    </source>
</evidence>
<evidence type="ECO:0000305" key="2"/>
<keyword id="KW-1185">Reference proteome</keyword>
<keyword id="KW-0687">Ribonucleoprotein</keyword>
<keyword id="KW-0689">Ribosomal protein</keyword>
<keyword id="KW-0694">RNA-binding</keyword>
<keyword id="KW-0699">rRNA-binding</keyword>
<dbReference type="EMBL" id="AL591688">
    <property type="protein sequence ID" value="CAC45716.1"/>
    <property type="molecule type" value="Genomic_DNA"/>
</dbReference>
<dbReference type="RefSeq" id="NP_385243.1">
    <property type="nucleotide sequence ID" value="NC_003047.1"/>
</dbReference>
<dbReference type="RefSeq" id="WP_003531693.1">
    <property type="nucleotide sequence ID" value="NC_003047.1"/>
</dbReference>
<dbReference type="SMR" id="Q92QZ8"/>
<dbReference type="EnsemblBacteria" id="CAC45716">
    <property type="protein sequence ID" value="CAC45716"/>
    <property type="gene ID" value="SMc00567"/>
</dbReference>
<dbReference type="GeneID" id="89575460"/>
<dbReference type="KEGG" id="sme:SMc00567"/>
<dbReference type="PATRIC" id="fig|266834.11.peg.2546"/>
<dbReference type="eggNOG" id="COG0238">
    <property type="taxonomic scope" value="Bacteria"/>
</dbReference>
<dbReference type="HOGENOM" id="CLU_148710_2_2_5"/>
<dbReference type="OrthoDB" id="9812008at2"/>
<dbReference type="Proteomes" id="UP000001976">
    <property type="component" value="Chromosome"/>
</dbReference>
<dbReference type="GO" id="GO:0022627">
    <property type="term" value="C:cytosolic small ribosomal subunit"/>
    <property type="evidence" value="ECO:0007669"/>
    <property type="project" value="TreeGrafter"/>
</dbReference>
<dbReference type="GO" id="GO:0070181">
    <property type="term" value="F:small ribosomal subunit rRNA binding"/>
    <property type="evidence" value="ECO:0007669"/>
    <property type="project" value="TreeGrafter"/>
</dbReference>
<dbReference type="GO" id="GO:0003735">
    <property type="term" value="F:structural constituent of ribosome"/>
    <property type="evidence" value="ECO:0007669"/>
    <property type="project" value="InterPro"/>
</dbReference>
<dbReference type="GO" id="GO:0006412">
    <property type="term" value="P:translation"/>
    <property type="evidence" value="ECO:0007669"/>
    <property type="project" value="UniProtKB-UniRule"/>
</dbReference>
<dbReference type="Gene3D" id="4.10.640.10">
    <property type="entry name" value="Ribosomal protein S18"/>
    <property type="match status" value="1"/>
</dbReference>
<dbReference type="HAMAP" id="MF_00270">
    <property type="entry name" value="Ribosomal_bS18"/>
    <property type="match status" value="1"/>
</dbReference>
<dbReference type="InterPro" id="IPR001648">
    <property type="entry name" value="Ribosomal_bS18"/>
</dbReference>
<dbReference type="InterPro" id="IPR018275">
    <property type="entry name" value="Ribosomal_bS18_CS"/>
</dbReference>
<dbReference type="InterPro" id="IPR036870">
    <property type="entry name" value="Ribosomal_bS18_sf"/>
</dbReference>
<dbReference type="NCBIfam" id="TIGR00165">
    <property type="entry name" value="S18"/>
    <property type="match status" value="1"/>
</dbReference>
<dbReference type="PANTHER" id="PTHR13479">
    <property type="entry name" value="30S RIBOSOMAL PROTEIN S18"/>
    <property type="match status" value="1"/>
</dbReference>
<dbReference type="PANTHER" id="PTHR13479:SF40">
    <property type="entry name" value="SMALL RIBOSOMAL SUBUNIT PROTEIN BS18M"/>
    <property type="match status" value="1"/>
</dbReference>
<dbReference type="Pfam" id="PF01084">
    <property type="entry name" value="Ribosomal_S18"/>
    <property type="match status" value="1"/>
</dbReference>
<dbReference type="PRINTS" id="PR00974">
    <property type="entry name" value="RIBOSOMALS18"/>
</dbReference>
<dbReference type="SUPFAM" id="SSF46911">
    <property type="entry name" value="Ribosomal protein S18"/>
    <property type="match status" value="1"/>
</dbReference>
<dbReference type="PROSITE" id="PS00057">
    <property type="entry name" value="RIBOSOMAL_S18"/>
    <property type="match status" value="1"/>
</dbReference>
<accession>Q92QZ8</accession>
<comment type="function">
    <text evidence="1">Binds as a heterodimer with protein bS6 to the central domain of the 16S rRNA, where it helps stabilize the platform of the 30S subunit.</text>
</comment>
<comment type="subunit">
    <text evidence="1">Part of the 30S ribosomal subunit. Forms a tight heterodimer with protein bS6.</text>
</comment>
<comment type="similarity">
    <text evidence="1">Belongs to the bacterial ribosomal protein bS18 family.</text>
</comment>
<organism>
    <name type="scientific">Rhizobium meliloti (strain 1021)</name>
    <name type="common">Ensifer meliloti</name>
    <name type="synonym">Sinorhizobium meliloti</name>
    <dbReference type="NCBI Taxonomy" id="266834"/>
    <lineage>
        <taxon>Bacteria</taxon>
        <taxon>Pseudomonadati</taxon>
        <taxon>Pseudomonadota</taxon>
        <taxon>Alphaproteobacteria</taxon>
        <taxon>Hyphomicrobiales</taxon>
        <taxon>Rhizobiaceae</taxon>
        <taxon>Sinorhizobium/Ensifer group</taxon>
        <taxon>Sinorhizobium</taxon>
    </lineage>
</organism>
<reference key="1">
    <citation type="journal article" date="2001" name="Proc. Natl. Acad. Sci. U.S.A.">
        <title>Analysis of the chromosome sequence of the legume symbiont Sinorhizobium meliloti strain 1021.</title>
        <authorList>
            <person name="Capela D."/>
            <person name="Barloy-Hubler F."/>
            <person name="Gouzy J."/>
            <person name="Bothe G."/>
            <person name="Ampe F."/>
            <person name="Batut J."/>
            <person name="Boistard P."/>
            <person name="Becker A."/>
            <person name="Boutry M."/>
            <person name="Cadieu E."/>
            <person name="Dreano S."/>
            <person name="Gloux S."/>
            <person name="Godrie T."/>
            <person name="Goffeau A."/>
            <person name="Kahn D."/>
            <person name="Kiss E."/>
            <person name="Lelaure V."/>
            <person name="Masuy D."/>
            <person name="Pohl T."/>
            <person name="Portetelle D."/>
            <person name="Puehler A."/>
            <person name="Purnelle B."/>
            <person name="Ramsperger U."/>
            <person name="Renard C."/>
            <person name="Thebault P."/>
            <person name="Vandenbol M."/>
            <person name="Weidner S."/>
            <person name="Galibert F."/>
        </authorList>
    </citation>
    <scope>NUCLEOTIDE SEQUENCE [LARGE SCALE GENOMIC DNA]</scope>
    <source>
        <strain>1021</strain>
    </source>
</reference>
<reference key="2">
    <citation type="journal article" date="2001" name="Science">
        <title>The composite genome of the legume symbiont Sinorhizobium meliloti.</title>
        <authorList>
            <person name="Galibert F."/>
            <person name="Finan T.M."/>
            <person name="Long S.R."/>
            <person name="Puehler A."/>
            <person name="Abola P."/>
            <person name="Ampe F."/>
            <person name="Barloy-Hubler F."/>
            <person name="Barnett M.J."/>
            <person name="Becker A."/>
            <person name="Boistard P."/>
            <person name="Bothe G."/>
            <person name="Boutry M."/>
            <person name="Bowser L."/>
            <person name="Buhrmester J."/>
            <person name="Cadieu E."/>
            <person name="Capela D."/>
            <person name="Chain P."/>
            <person name="Cowie A."/>
            <person name="Davis R.W."/>
            <person name="Dreano S."/>
            <person name="Federspiel N.A."/>
            <person name="Fisher R.F."/>
            <person name="Gloux S."/>
            <person name="Godrie T."/>
            <person name="Goffeau A."/>
            <person name="Golding B."/>
            <person name="Gouzy J."/>
            <person name="Gurjal M."/>
            <person name="Hernandez-Lucas I."/>
            <person name="Hong A."/>
            <person name="Huizar L."/>
            <person name="Hyman R.W."/>
            <person name="Jones T."/>
            <person name="Kahn D."/>
            <person name="Kahn M.L."/>
            <person name="Kalman S."/>
            <person name="Keating D.H."/>
            <person name="Kiss E."/>
            <person name="Komp C."/>
            <person name="Lelaure V."/>
            <person name="Masuy D."/>
            <person name="Palm C."/>
            <person name="Peck M.C."/>
            <person name="Pohl T.M."/>
            <person name="Portetelle D."/>
            <person name="Purnelle B."/>
            <person name="Ramsperger U."/>
            <person name="Surzycki R."/>
            <person name="Thebault P."/>
            <person name="Vandenbol M."/>
            <person name="Vorhoelter F.J."/>
            <person name="Weidner S."/>
            <person name="Wells D.H."/>
            <person name="Wong K."/>
            <person name="Yeh K.-C."/>
            <person name="Batut J."/>
        </authorList>
    </citation>
    <scope>NUCLEOTIDE SEQUENCE [LARGE SCALE GENOMIC DNA]</scope>
    <source>
        <strain>1021</strain>
    </source>
</reference>